<gene>
    <name evidence="1" type="primary">dnaJ</name>
    <name type="ordered locus">Erum0130</name>
    <name type="ordered locus">ERWE_CDS_09580</name>
</gene>
<evidence type="ECO:0000255" key="1">
    <source>
        <dbReference type="HAMAP-Rule" id="MF_01152"/>
    </source>
</evidence>
<dbReference type="EMBL" id="CR767821">
    <property type="protein sequence ID" value="CAH57720.1"/>
    <property type="molecule type" value="Genomic_DNA"/>
</dbReference>
<dbReference type="EMBL" id="CR925678">
    <property type="protein sequence ID" value="CAI27452.1"/>
    <property type="molecule type" value="Genomic_DNA"/>
</dbReference>
<dbReference type="RefSeq" id="WP_011154696.1">
    <property type="nucleotide sequence ID" value="NC_005295.2"/>
</dbReference>
<dbReference type="SMR" id="Q5HCG4"/>
<dbReference type="GeneID" id="33058432"/>
<dbReference type="KEGG" id="eru:Erum0130"/>
<dbReference type="KEGG" id="erw:ERWE_CDS_09580"/>
<dbReference type="eggNOG" id="COG0484">
    <property type="taxonomic scope" value="Bacteria"/>
</dbReference>
<dbReference type="HOGENOM" id="CLU_017633_0_7_5"/>
<dbReference type="Proteomes" id="UP000001021">
    <property type="component" value="Chromosome"/>
</dbReference>
<dbReference type="GO" id="GO:0005737">
    <property type="term" value="C:cytoplasm"/>
    <property type="evidence" value="ECO:0007669"/>
    <property type="project" value="UniProtKB-SubCell"/>
</dbReference>
<dbReference type="GO" id="GO:0005524">
    <property type="term" value="F:ATP binding"/>
    <property type="evidence" value="ECO:0007669"/>
    <property type="project" value="InterPro"/>
</dbReference>
<dbReference type="GO" id="GO:0031072">
    <property type="term" value="F:heat shock protein binding"/>
    <property type="evidence" value="ECO:0007669"/>
    <property type="project" value="InterPro"/>
</dbReference>
<dbReference type="GO" id="GO:0051082">
    <property type="term" value="F:unfolded protein binding"/>
    <property type="evidence" value="ECO:0007669"/>
    <property type="project" value="UniProtKB-UniRule"/>
</dbReference>
<dbReference type="GO" id="GO:0008270">
    <property type="term" value="F:zinc ion binding"/>
    <property type="evidence" value="ECO:0007669"/>
    <property type="project" value="UniProtKB-UniRule"/>
</dbReference>
<dbReference type="GO" id="GO:0051085">
    <property type="term" value="P:chaperone cofactor-dependent protein refolding"/>
    <property type="evidence" value="ECO:0007669"/>
    <property type="project" value="TreeGrafter"/>
</dbReference>
<dbReference type="GO" id="GO:0006260">
    <property type="term" value="P:DNA replication"/>
    <property type="evidence" value="ECO:0007669"/>
    <property type="project" value="UniProtKB-KW"/>
</dbReference>
<dbReference type="GO" id="GO:0042026">
    <property type="term" value="P:protein refolding"/>
    <property type="evidence" value="ECO:0007669"/>
    <property type="project" value="TreeGrafter"/>
</dbReference>
<dbReference type="GO" id="GO:0009408">
    <property type="term" value="P:response to heat"/>
    <property type="evidence" value="ECO:0007669"/>
    <property type="project" value="InterPro"/>
</dbReference>
<dbReference type="CDD" id="cd06257">
    <property type="entry name" value="DnaJ"/>
    <property type="match status" value="1"/>
</dbReference>
<dbReference type="CDD" id="cd10747">
    <property type="entry name" value="DnaJ_C"/>
    <property type="match status" value="1"/>
</dbReference>
<dbReference type="CDD" id="cd10719">
    <property type="entry name" value="DnaJ_zf"/>
    <property type="match status" value="1"/>
</dbReference>
<dbReference type="FunFam" id="1.10.287.110:FF:000034">
    <property type="entry name" value="Chaperone protein DnaJ"/>
    <property type="match status" value="1"/>
</dbReference>
<dbReference type="FunFam" id="2.10.230.10:FF:000002">
    <property type="entry name" value="Molecular chaperone DnaJ"/>
    <property type="match status" value="1"/>
</dbReference>
<dbReference type="FunFam" id="2.60.260.20:FF:000004">
    <property type="entry name" value="Molecular chaperone DnaJ"/>
    <property type="match status" value="1"/>
</dbReference>
<dbReference type="Gene3D" id="1.10.287.110">
    <property type="entry name" value="DnaJ domain"/>
    <property type="match status" value="1"/>
</dbReference>
<dbReference type="Gene3D" id="2.10.230.10">
    <property type="entry name" value="Heat shock protein DnaJ, cysteine-rich domain"/>
    <property type="match status" value="1"/>
</dbReference>
<dbReference type="Gene3D" id="2.60.260.20">
    <property type="entry name" value="Urease metallochaperone UreE, N-terminal domain"/>
    <property type="match status" value="2"/>
</dbReference>
<dbReference type="HAMAP" id="MF_01152">
    <property type="entry name" value="DnaJ"/>
    <property type="match status" value="1"/>
</dbReference>
<dbReference type="InterPro" id="IPR012724">
    <property type="entry name" value="DnaJ"/>
</dbReference>
<dbReference type="InterPro" id="IPR002939">
    <property type="entry name" value="DnaJ_C"/>
</dbReference>
<dbReference type="InterPro" id="IPR001623">
    <property type="entry name" value="DnaJ_domain"/>
</dbReference>
<dbReference type="InterPro" id="IPR018253">
    <property type="entry name" value="DnaJ_domain_CS"/>
</dbReference>
<dbReference type="InterPro" id="IPR008971">
    <property type="entry name" value="HSP40/DnaJ_pept-bd"/>
</dbReference>
<dbReference type="InterPro" id="IPR001305">
    <property type="entry name" value="HSP_DnaJ_Cys-rich_dom"/>
</dbReference>
<dbReference type="InterPro" id="IPR036410">
    <property type="entry name" value="HSP_DnaJ_Cys-rich_dom_sf"/>
</dbReference>
<dbReference type="InterPro" id="IPR036869">
    <property type="entry name" value="J_dom_sf"/>
</dbReference>
<dbReference type="NCBIfam" id="TIGR02349">
    <property type="entry name" value="DnaJ_bact"/>
    <property type="match status" value="1"/>
</dbReference>
<dbReference type="NCBIfam" id="NF008035">
    <property type="entry name" value="PRK10767.1"/>
    <property type="match status" value="1"/>
</dbReference>
<dbReference type="PANTHER" id="PTHR43096:SF48">
    <property type="entry name" value="CHAPERONE PROTEIN DNAJ"/>
    <property type="match status" value="1"/>
</dbReference>
<dbReference type="PANTHER" id="PTHR43096">
    <property type="entry name" value="DNAJ HOMOLOG 1, MITOCHONDRIAL-RELATED"/>
    <property type="match status" value="1"/>
</dbReference>
<dbReference type="Pfam" id="PF00226">
    <property type="entry name" value="DnaJ"/>
    <property type="match status" value="1"/>
</dbReference>
<dbReference type="Pfam" id="PF01556">
    <property type="entry name" value="DnaJ_C"/>
    <property type="match status" value="1"/>
</dbReference>
<dbReference type="Pfam" id="PF00684">
    <property type="entry name" value="DnaJ_CXXCXGXG"/>
    <property type="match status" value="1"/>
</dbReference>
<dbReference type="PRINTS" id="PR00625">
    <property type="entry name" value="JDOMAIN"/>
</dbReference>
<dbReference type="SMART" id="SM00271">
    <property type="entry name" value="DnaJ"/>
    <property type="match status" value="1"/>
</dbReference>
<dbReference type="SUPFAM" id="SSF46565">
    <property type="entry name" value="Chaperone J-domain"/>
    <property type="match status" value="1"/>
</dbReference>
<dbReference type="SUPFAM" id="SSF57938">
    <property type="entry name" value="DnaJ/Hsp40 cysteine-rich domain"/>
    <property type="match status" value="1"/>
</dbReference>
<dbReference type="SUPFAM" id="SSF49493">
    <property type="entry name" value="HSP40/DnaJ peptide-binding domain"/>
    <property type="match status" value="2"/>
</dbReference>
<dbReference type="PROSITE" id="PS00636">
    <property type="entry name" value="DNAJ_1"/>
    <property type="match status" value="1"/>
</dbReference>
<dbReference type="PROSITE" id="PS50076">
    <property type="entry name" value="DNAJ_2"/>
    <property type="match status" value="1"/>
</dbReference>
<dbReference type="PROSITE" id="PS51188">
    <property type="entry name" value="ZF_CR"/>
    <property type="match status" value="1"/>
</dbReference>
<feature type="chain" id="PRO_0000070782" description="Chaperone protein DnaJ">
    <location>
        <begin position="1"/>
        <end position="382"/>
    </location>
</feature>
<feature type="domain" description="J" evidence="1">
    <location>
        <begin position="5"/>
        <end position="70"/>
    </location>
</feature>
<feature type="repeat" description="CXXCXGXG motif">
    <location>
        <begin position="151"/>
        <end position="158"/>
    </location>
</feature>
<feature type="repeat" description="CXXCXGXG motif">
    <location>
        <begin position="168"/>
        <end position="175"/>
    </location>
</feature>
<feature type="repeat" description="CXXCXGXG motif">
    <location>
        <begin position="190"/>
        <end position="197"/>
    </location>
</feature>
<feature type="repeat" description="CXXCXGXG motif">
    <location>
        <begin position="204"/>
        <end position="211"/>
    </location>
</feature>
<feature type="zinc finger region" description="CR-type" evidence="1">
    <location>
        <begin position="138"/>
        <end position="216"/>
    </location>
</feature>
<feature type="binding site" evidence="1">
    <location>
        <position position="151"/>
    </location>
    <ligand>
        <name>Zn(2+)</name>
        <dbReference type="ChEBI" id="CHEBI:29105"/>
        <label>1</label>
    </ligand>
</feature>
<feature type="binding site" evidence="1">
    <location>
        <position position="154"/>
    </location>
    <ligand>
        <name>Zn(2+)</name>
        <dbReference type="ChEBI" id="CHEBI:29105"/>
        <label>1</label>
    </ligand>
</feature>
<feature type="binding site" evidence="1">
    <location>
        <position position="168"/>
    </location>
    <ligand>
        <name>Zn(2+)</name>
        <dbReference type="ChEBI" id="CHEBI:29105"/>
        <label>2</label>
    </ligand>
</feature>
<feature type="binding site" evidence="1">
    <location>
        <position position="171"/>
    </location>
    <ligand>
        <name>Zn(2+)</name>
        <dbReference type="ChEBI" id="CHEBI:29105"/>
        <label>2</label>
    </ligand>
</feature>
<feature type="binding site" evidence="1">
    <location>
        <position position="190"/>
    </location>
    <ligand>
        <name>Zn(2+)</name>
        <dbReference type="ChEBI" id="CHEBI:29105"/>
        <label>2</label>
    </ligand>
</feature>
<feature type="binding site" evidence="1">
    <location>
        <position position="193"/>
    </location>
    <ligand>
        <name>Zn(2+)</name>
        <dbReference type="ChEBI" id="CHEBI:29105"/>
        <label>2</label>
    </ligand>
</feature>
<feature type="binding site" evidence="1">
    <location>
        <position position="204"/>
    </location>
    <ligand>
        <name>Zn(2+)</name>
        <dbReference type="ChEBI" id="CHEBI:29105"/>
        <label>1</label>
    </ligand>
</feature>
<feature type="binding site" evidence="1">
    <location>
        <position position="207"/>
    </location>
    <ligand>
        <name>Zn(2+)</name>
        <dbReference type="ChEBI" id="CHEBI:29105"/>
        <label>1</label>
    </ligand>
</feature>
<protein>
    <recommendedName>
        <fullName evidence="1">Chaperone protein DnaJ</fullName>
    </recommendedName>
</protein>
<keyword id="KW-0143">Chaperone</keyword>
<keyword id="KW-0963">Cytoplasm</keyword>
<keyword id="KW-0235">DNA replication</keyword>
<keyword id="KW-0479">Metal-binding</keyword>
<keyword id="KW-0677">Repeat</keyword>
<keyword id="KW-0346">Stress response</keyword>
<keyword id="KW-0862">Zinc</keyword>
<keyword id="KW-0863">Zinc-finger</keyword>
<sequence>MSKSDYYDLLGLSKNATPEEIKKAYRKMALKYHPDKNPGDKAAEEKFKELSEAYDVLIDKDKRAAYDRYGHSAFSDGSGRGGFDFNSGFSTDFSDIFNDLFGGGFRGGRSSSKRQDGGTVGSDLRLDIEITLEDSFNGTKVPINYVTHVKCSSCSGSGSEGSVKSVQCNTCHGAGNIRTQQGFFTIERTCHVCNGEGEIIKNKCKKCSGSGRVRDEVNLLVTVPKGIESGDKIRLNGKGEAGYRGAQSGDLYVYPNIKKHKFFTRNGADLYCNVPIKMILATLGGHIEMPSIDGTWTKVKVPEGSQNGDKLRLKEKGMPVINSSRRGDMYIQITVETPINLTKQQKELLKKFDEEPNTVECNPQSTGFFQKVKSFWNDIRSS</sequence>
<comment type="function">
    <text evidence="1">Participates actively in the response to hyperosmotic and heat shock by preventing the aggregation of stress-denatured proteins and by disaggregating proteins, also in an autonomous, DnaK-independent fashion. Unfolded proteins bind initially to DnaJ; upon interaction with the DnaJ-bound protein, DnaK hydrolyzes its bound ATP, resulting in the formation of a stable complex. GrpE releases ADP from DnaK; ATP binding to DnaK triggers the release of the substrate protein, thus completing the reaction cycle. Several rounds of ATP-dependent interactions between DnaJ, DnaK and GrpE are required for fully efficient folding. Also involved, together with DnaK and GrpE, in the DNA replication of plasmids through activation of initiation proteins.</text>
</comment>
<comment type="cofactor">
    <cofactor evidence="1">
        <name>Zn(2+)</name>
        <dbReference type="ChEBI" id="CHEBI:29105"/>
    </cofactor>
    <text evidence="1">Binds 2 Zn(2+) ions per monomer.</text>
</comment>
<comment type="subunit">
    <text evidence="1">Homodimer.</text>
</comment>
<comment type="subcellular location">
    <subcellularLocation>
        <location evidence="1">Cytoplasm</location>
    </subcellularLocation>
</comment>
<comment type="domain">
    <text evidence="1">The J domain is necessary and sufficient to stimulate DnaK ATPase activity. Zinc center 1 plays an important role in the autonomous, DnaK-independent chaperone activity of DnaJ. Zinc center 2 is essential for interaction with DnaK and for DnaJ activity.</text>
</comment>
<comment type="similarity">
    <text evidence="1">Belongs to the DnaJ family.</text>
</comment>
<accession>Q5HCG4</accession>
<accession>Q5FCE1</accession>
<proteinExistence type="inferred from homology"/>
<organism>
    <name type="scientific">Ehrlichia ruminantium (strain Welgevonden)</name>
    <dbReference type="NCBI Taxonomy" id="254945"/>
    <lineage>
        <taxon>Bacteria</taxon>
        <taxon>Pseudomonadati</taxon>
        <taxon>Pseudomonadota</taxon>
        <taxon>Alphaproteobacteria</taxon>
        <taxon>Rickettsiales</taxon>
        <taxon>Anaplasmataceae</taxon>
        <taxon>Ehrlichia</taxon>
    </lineage>
</organism>
<reference key="1">
    <citation type="journal article" date="2005" name="Proc. Natl. Acad. Sci. U.S.A.">
        <title>The genome of the heartwater agent Ehrlichia ruminantium contains multiple tandem repeats of actively variable copy number.</title>
        <authorList>
            <person name="Collins N.E."/>
            <person name="Liebenberg J."/>
            <person name="de Villiers E.P."/>
            <person name="Brayton K.A."/>
            <person name="Louw E."/>
            <person name="Pretorius A."/>
            <person name="Faber F.E."/>
            <person name="van Heerden H."/>
            <person name="Josemans A."/>
            <person name="van Kleef M."/>
            <person name="Steyn H.C."/>
            <person name="van Strijp M.F."/>
            <person name="Zweygarth E."/>
            <person name="Jongejan F."/>
            <person name="Maillard J.C."/>
            <person name="Berthier D."/>
            <person name="Botha M."/>
            <person name="Joubert F."/>
            <person name="Corton C.H."/>
            <person name="Thomson N.R."/>
            <person name="Allsopp M.T."/>
            <person name="Allsopp B.A."/>
        </authorList>
    </citation>
    <scope>NUCLEOTIDE SEQUENCE [LARGE SCALE GENOMIC DNA]</scope>
    <source>
        <strain>Welgevonden</strain>
    </source>
</reference>
<reference key="2">
    <citation type="journal article" date="2006" name="J. Bacteriol.">
        <title>Comparative genomic analysis of three strains of Ehrlichia ruminantium reveals an active process of genome size plasticity.</title>
        <authorList>
            <person name="Frutos R."/>
            <person name="Viari A."/>
            <person name="Ferraz C."/>
            <person name="Morgat A."/>
            <person name="Eychenie S."/>
            <person name="Kandassamy Y."/>
            <person name="Chantal I."/>
            <person name="Bensaid A."/>
            <person name="Coissac E."/>
            <person name="Vachiery N."/>
            <person name="Demaille J."/>
            <person name="Martinez D."/>
        </authorList>
    </citation>
    <scope>NUCLEOTIDE SEQUENCE [LARGE SCALE GENOMIC DNA]</scope>
    <source>
        <strain>Welgevonden</strain>
    </source>
</reference>
<name>DNAJ_EHRRW</name>